<name>SCONB_EMENI</name>
<reference key="1">
    <citation type="journal article" date="1998" name="Mol. Gen. Genet.">
        <title>The Aspergillus nidulans sulphur regulatory gene sconB encodes a protein with WD40 repeats and an F-box.</title>
        <authorList>
            <person name="Natorff R."/>
            <person name="Piotrowska M."/>
            <person name="Paszewski A."/>
        </authorList>
    </citation>
    <scope>NUCLEOTIDE SEQUENCE [GENOMIC DNA]</scope>
</reference>
<reference key="2">
    <citation type="journal article" date="2005" name="Nature">
        <title>Sequencing of Aspergillus nidulans and comparative analysis with A. fumigatus and A. oryzae.</title>
        <authorList>
            <person name="Galagan J.E."/>
            <person name="Calvo S.E."/>
            <person name="Cuomo C."/>
            <person name="Ma L.-J."/>
            <person name="Wortman J.R."/>
            <person name="Batzoglou S."/>
            <person name="Lee S.-I."/>
            <person name="Bastuerkmen M."/>
            <person name="Spevak C.C."/>
            <person name="Clutterbuck J."/>
            <person name="Kapitonov V."/>
            <person name="Jurka J."/>
            <person name="Scazzocchio C."/>
            <person name="Farman M.L."/>
            <person name="Butler J."/>
            <person name="Purcell S."/>
            <person name="Harris S."/>
            <person name="Braus G.H."/>
            <person name="Draht O."/>
            <person name="Busch S."/>
            <person name="D'Enfert C."/>
            <person name="Bouchier C."/>
            <person name="Goldman G.H."/>
            <person name="Bell-Pedersen D."/>
            <person name="Griffiths-Jones S."/>
            <person name="Doonan J.H."/>
            <person name="Yu J."/>
            <person name="Vienken K."/>
            <person name="Pain A."/>
            <person name="Freitag M."/>
            <person name="Selker E.U."/>
            <person name="Archer D.B."/>
            <person name="Penalva M.A."/>
            <person name="Oakley B.R."/>
            <person name="Momany M."/>
            <person name="Tanaka T."/>
            <person name="Kumagai T."/>
            <person name="Asai K."/>
            <person name="Machida M."/>
            <person name="Nierman W.C."/>
            <person name="Denning D.W."/>
            <person name="Caddick M.X."/>
            <person name="Hynes M."/>
            <person name="Paoletti M."/>
            <person name="Fischer R."/>
            <person name="Miller B.L."/>
            <person name="Dyer P.S."/>
            <person name="Sachs M.S."/>
            <person name="Osmani S.A."/>
            <person name="Birren B.W."/>
        </authorList>
    </citation>
    <scope>NUCLEOTIDE SEQUENCE [LARGE SCALE GENOMIC DNA]</scope>
    <source>
        <strain>FGSC A4 / ATCC 38163 / CBS 112.46 / NRRL 194 / M139</strain>
    </source>
</reference>
<reference key="3">
    <citation type="journal article" date="2009" name="Fungal Genet. Biol.">
        <title>The 2008 update of the Aspergillus nidulans genome annotation: a community effort.</title>
        <authorList>
            <person name="Wortman J.R."/>
            <person name="Gilsenan J.M."/>
            <person name="Joardar V."/>
            <person name="Deegan J."/>
            <person name="Clutterbuck J."/>
            <person name="Andersen M.R."/>
            <person name="Archer D."/>
            <person name="Bencina M."/>
            <person name="Braus G."/>
            <person name="Coutinho P."/>
            <person name="von Dohren H."/>
            <person name="Doonan J."/>
            <person name="Driessen A.J."/>
            <person name="Durek P."/>
            <person name="Espeso E."/>
            <person name="Fekete E."/>
            <person name="Flipphi M."/>
            <person name="Estrada C.G."/>
            <person name="Geysens S."/>
            <person name="Goldman G."/>
            <person name="de Groot P.W."/>
            <person name="Hansen K."/>
            <person name="Harris S.D."/>
            <person name="Heinekamp T."/>
            <person name="Helmstaedt K."/>
            <person name="Henrissat B."/>
            <person name="Hofmann G."/>
            <person name="Homan T."/>
            <person name="Horio T."/>
            <person name="Horiuchi H."/>
            <person name="James S."/>
            <person name="Jones M."/>
            <person name="Karaffa L."/>
            <person name="Karanyi Z."/>
            <person name="Kato M."/>
            <person name="Keller N."/>
            <person name="Kelly D.E."/>
            <person name="Kiel J.A."/>
            <person name="Kim J.M."/>
            <person name="van der Klei I.J."/>
            <person name="Klis F.M."/>
            <person name="Kovalchuk A."/>
            <person name="Krasevec N."/>
            <person name="Kubicek C.P."/>
            <person name="Liu B."/>
            <person name="Maccabe A."/>
            <person name="Meyer V."/>
            <person name="Mirabito P."/>
            <person name="Miskei M."/>
            <person name="Mos M."/>
            <person name="Mullins J."/>
            <person name="Nelson D.R."/>
            <person name="Nielsen J."/>
            <person name="Oakley B.R."/>
            <person name="Osmani S.A."/>
            <person name="Pakula T."/>
            <person name="Paszewski A."/>
            <person name="Paulsen I."/>
            <person name="Pilsyk S."/>
            <person name="Pocsi I."/>
            <person name="Punt P.J."/>
            <person name="Ram A.F."/>
            <person name="Ren Q."/>
            <person name="Robellet X."/>
            <person name="Robson G."/>
            <person name="Seiboth B."/>
            <person name="van Solingen P."/>
            <person name="Specht T."/>
            <person name="Sun J."/>
            <person name="Taheri-Talesh N."/>
            <person name="Takeshita N."/>
            <person name="Ussery D."/>
            <person name="vanKuyk P.A."/>
            <person name="Visser H."/>
            <person name="van de Vondervoort P.J."/>
            <person name="de Vries R.P."/>
            <person name="Walton J."/>
            <person name="Xiang X."/>
            <person name="Xiong Y."/>
            <person name="Zeng A.P."/>
            <person name="Brandt B.W."/>
            <person name="Cornell M.J."/>
            <person name="van den Hondel C.A."/>
            <person name="Visser J."/>
            <person name="Oliver S.G."/>
            <person name="Turner G."/>
        </authorList>
    </citation>
    <scope>GENOME REANNOTATION</scope>
    <source>
        <strain>FGSC A4 / ATCC 38163 / CBS 112.46 / NRRL 194 / M139</strain>
    </source>
</reference>
<reference key="4">
    <citation type="journal article" date="1993" name="Mol. Gen. Genet.">
        <title>At least four regulatory genes control sulphur metabolite repression in Aspergillus nidulans.</title>
        <authorList>
            <person name="Natorff R."/>
            <person name="Balinska M."/>
            <person name="Paszewski A."/>
        </authorList>
    </citation>
    <scope>FUNCTION</scope>
</reference>
<organism>
    <name type="scientific">Emericella nidulans (strain FGSC A4 / ATCC 38163 / CBS 112.46 / NRRL 194 / M139)</name>
    <name type="common">Aspergillus nidulans</name>
    <dbReference type="NCBI Taxonomy" id="227321"/>
    <lineage>
        <taxon>Eukaryota</taxon>
        <taxon>Fungi</taxon>
        <taxon>Dikarya</taxon>
        <taxon>Ascomycota</taxon>
        <taxon>Pezizomycotina</taxon>
        <taxon>Eurotiomycetes</taxon>
        <taxon>Eurotiomycetidae</taxon>
        <taxon>Eurotiales</taxon>
        <taxon>Aspergillaceae</taxon>
        <taxon>Aspergillus</taxon>
        <taxon>Aspergillus subgen. Nidulantes</taxon>
    </lineage>
</organism>
<keyword id="KW-1185">Reference proteome</keyword>
<keyword id="KW-0677">Repeat</keyword>
<keyword id="KW-0804">Transcription</keyword>
<keyword id="KW-0805">Transcription regulation</keyword>
<keyword id="KW-0833">Ubl conjugation pathway</keyword>
<keyword id="KW-0853">WD repeat</keyword>
<evidence type="ECO:0000250" key="1"/>
<evidence type="ECO:0000255" key="2">
    <source>
        <dbReference type="PROSITE-ProRule" id="PRU00080"/>
    </source>
</evidence>
<evidence type="ECO:0000256" key="3">
    <source>
        <dbReference type="SAM" id="MobiDB-lite"/>
    </source>
</evidence>
<evidence type="ECO:0000269" key="4">
    <source>
    </source>
</evidence>
<evidence type="ECO:0000305" key="5"/>
<proteinExistence type="inferred from homology"/>
<feature type="chain" id="PRO_0000051210" description="Probable E3 ubiquitin ligase complex SCF subunit sconB">
    <location>
        <begin position="1"/>
        <end position="678"/>
    </location>
</feature>
<feature type="domain" description="F-box" evidence="2">
    <location>
        <begin position="178"/>
        <end position="224"/>
    </location>
</feature>
<feature type="repeat" description="WD 1">
    <location>
        <begin position="347"/>
        <end position="375"/>
    </location>
</feature>
<feature type="repeat" description="WD 2">
    <location>
        <begin position="387"/>
        <end position="415"/>
    </location>
</feature>
<feature type="repeat" description="WD 3">
    <location>
        <begin position="427"/>
        <end position="455"/>
    </location>
</feature>
<feature type="repeat" description="WD 4">
    <location>
        <begin position="466"/>
        <end position="496"/>
    </location>
</feature>
<feature type="repeat" description="WD 5">
    <location>
        <begin position="508"/>
        <end position="543"/>
    </location>
</feature>
<feature type="repeat" description="WD 6">
    <location>
        <begin position="553"/>
        <end position="595"/>
    </location>
</feature>
<feature type="repeat" description="WD 7">
    <location>
        <begin position="607"/>
        <end position="635"/>
    </location>
</feature>
<feature type="repeat" description="WD 8">
    <location>
        <begin position="647"/>
        <end position="675"/>
    </location>
</feature>
<feature type="region of interest" description="Disordered" evidence="3">
    <location>
        <begin position="1"/>
        <end position="52"/>
    </location>
</feature>
<feature type="region of interest" description="Disordered" evidence="3">
    <location>
        <begin position="266"/>
        <end position="287"/>
    </location>
</feature>
<feature type="compositionally biased region" description="Basic and acidic residues" evidence="3">
    <location>
        <begin position="35"/>
        <end position="49"/>
    </location>
</feature>
<feature type="sequence conflict" description="In Ref. 1; AAC15905." evidence="5" ref="1">
    <original>D</original>
    <variation>N</variation>
    <location>
        <position position="545"/>
    </location>
</feature>
<protein>
    <recommendedName>
        <fullName>Probable E3 ubiquitin ligase complex SCF subunit sconB</fullName>
    </recommendedName>
    <alternativeName>
        <fullName>Sulfur controller B</fullName>
    </alternativeName>
    <alternativeName>
        <fullName>Sulfur metabolite repression control protein B</fullName>
    </alternativeName>
</protein>
<comment type="function">
    <text evidence="4">Component of the SCF(sconB) E3 ubiquitin ligase complex involved in the regulation of sulfur metabolite repression, probably by mediating the inactivation or degradation of the metR transcription factor.</text>
</comment>
<comment type="pathway">
    <text>Protein modification; protein ubiquitination.</text>
</comment>
<comment type="subunit">
    <text evidence="1">Component of the SCF(sconB) E3 ubiquitin ligase complex.</text>
</comment>
<comment type="similarity">
    <text evidence="5">Belongs to the WD repeat MET30/SCONB/SCON-2 family.</text>
</comment>
<sequence length="678" mass="76071">MSTEDNHDSQILTARHRSDASEQSFKSLFGGPSSEDGKETEPDTHDHNHSFSNAKAPAKFANQNVAPFLARHIPEQYAPLGAQSILPADLSSANSKYCYRHRPDQKCRRQADEPSMDKLQRELESLPQGDQQSISHVWSLFSAAPAKHRKLILQGIMAQCCFPQLSYISATVRDLIRIDFITALPPEIAFKILCYLDTTSLCKASQVSRGWRALADDDVVWHRMCEQHIHRKCKKCGWGLPLLDRKRLRESKREIELRATTWDKGVVGPRSPDASAESPPSGKRKLEDDEVAVVKRHCSSLGSDAGVDKDSDFFKTRYRPWKEVYKDRFKVGTNWKYGRCSIKTFKGHTNGVMCLQFEDNILATGSYDTTIKIWDTETGEELRTLRGHESGIRCLQFDDTKLISGSMDRTIKVWNWRTGECISTYTGHRGGVIGLHFDASILASGSVDKTVKIWNFEDKSTFSLRGHTDWVNAVRVDTSSRTVFSASDDCTVRLWDLDTKTCIRTFHGHVGQVQQVVPLPREFEFEEHDAECENDDLSTTSGDADPPSIQASMGLEPNAAYSQSSAFGTSFDNGRAAPPRYMVTSALDSTIRLWETTTGRCLRTFFGHLEGVWALGADTLRIVSGAEDRMIKIWDPRTGKCERTFTGHSGPVTCIGLGDSRFATGSEDCEVRMYSFQS</sequence>
<dbReference type="EMBL" id="U21220">
    <property type="protein sequence ID" value="AAC15905.1"/>
    <property type="molecule type" value="Genomic_DNA"/>
</dbReference>
<dbReference type="EMBL" id="AACD01000107">
    <property type="protein sequence ID" value="EAA58743.1"/>
    <property type="molecule type" value="Genomic_DNA"/>
</dbReference>
<dbReference type="EMBL" id="BN001301">
    <property type="protein sequence ID" value="CBF69629.1"/>
    <property type="molecule type" value="Genomic_DNA"/>
</dbReference>
<dbReference type="RefSeq" id="XP_663963.1">
    <property type="nucleotide sequence ID" value="XM_658871.1"/>
</dbReference>
<dbReference type="SMR" id="Q00659"/>
<dbReference type="FunCoup" id="Q00659">
    <property type="interactions" value="158"/>
</dbReference>
<dbReference type="STRING" id="227321.Q00659"/>
<dbReference type="EnsemblFungi" id="CBF69629">
    <property type="protein sequence ID" value="CBF69629"/>
    <property type="gene ID" value="ANIA_06359"/>
</dbReference>
<dbReference type="KEGG" id="ani:ANIA_06359"/>
<dbReference type="VEuPathDB" id="FungiDB:AN6359"/>
<dbReference type="eggNOG" id="KOG0274">
    <property type="taxonomic scope" value="Eukaryota"/>
</dbReference>
<dbReference type="HOGENOM" id="CLU_000288_103_1_1"/>
<dbReference type="InParanoid" id="Q00659"/>
<dbReference type="OMA" id="GIAHVWS"/>
<dbReference type="OrthoDB" id="5580488at2759"/>
<dbReference type="UniPathway" id="UPA00143"/>
<dbReference type="Proteomes" id="UP000000560">
    <property type="component" value="Chromosome I"/>
</dbReference>
<dbReference type="GO" id="GO:0043224">
    <property type="term" value="C:nuclear SCF ubiquitin ligase complex"/>
    <property type="evidence" value="ECO:0000318"/>
    <property type="project" value="GO_Central"/>
</dbReference>
<dbReference type="GO" id="GO:0005634">
    <property type="term" value="C:nucleus"/>
    <property type="evidence" value="ECO:0000318"/>
    <property type="project" value="GO_Central"/>
</dbReference>
<dbReference type="GO" id="GO:0043130">
    <property type="term" value="F:ubiquitin binding"/>
    <property type="evidence" value="ECO:0000318"/>
    <property type="project" value="GO_Central"/>
</dbReference>
<dbReference type="GO" id="GO:0000209">
    <property type="term" value="P:protein polyubiquitination"/>
    <property type="evidence" value="ECO:0000318"/>
    <property type="project" value="GO_Central"/>
</dbReference>
<dbReference type="CDD" id="cd22147">
    <property type="entry name" value="F-box_SpPof1-like"/>
    <property type="match status" value="1"/>
</dbReference>
<dbReference type="CDD" id="cd00200">
    <property type="entry name" value="WD40"/>
    <property type="match status" value="1"/>
</dbReference>
<dbReference type="FunFam" id="1.20.1280.50:FF:000016">
    <property type="entry name" value="E3 ubiquitin ligase complex SCF subunit sconB"/>
    <property type="match status" value="1"/>
</dbReference>
<dbReference type="FunFam" id="2.130.10.10:FF:000770">
    <property type="entry name" value="E3 ubiquitin ligase complex SCF subunit sconB"/>
    <property type="match status" value="1"/>
</dbReference>
<dbReference type="FunFam" id="2.130.10.10:FF:000890">
    <property type="entry name" value="Probable E3 ubiquitin ligase complex SCF subunit sconB"/>
    <property type="match status" value="1"/>
</dbReference>
<dbReference type="Gene3D" id="1.20.1280.50">
    <property type="match status" value="1"/>
</dbReference>
<dbReference type="Gene3D" id="2.130.10.10">
    <property type="entry name" value="YVTN repeat-like/Quinoprotein amine dehydrogenase"/>
    <property type="match status" value="2"/>
</dbReference>
<dbReference type="InterPro" id="IPR036047">
    <property type="entry name" value="F-box-like_dom_sf"/>
</dbReference>
<dbReference type="InterPro" id="IPR001810">
    <property type="entry name" value="F-box_dom"/>
</dbReference>
<dbReference type="InterPro" id="IPR020472">
    <property type="entry name" value="G-protein_beta_WD-40_rep"/>
</dbReference>
<dbReference type="InterPro" id="IPR051075">
    <property type="entry name" value="SCF_subunit_WD-repeat"/>
</dbReference>
<dbReference type="InterPro" id="IPR015943">
    <property type="entry name" value="WD40/YVTN_repeat-like_dom_sf"/>
</dbReference>
<dbReference type="InterPro" id="IPR019775">
    <property type="entry name" value="WD40_repeat_CS"/>
</dbReference>
<dbReference type="InterPro" id="IPR036322">
    <property type="entry name" value="WD40_repeat_dom_sf"/>
</dbReference>
<dbReference type="InterPro" id="IPR001680">
    <property type="entry name" value="WD40_rpt"/>
</dbReference>
<dbReference type="PANTHER" id="PTHR19872">
    <property type="entry name" value="UBIQUITIN LIGASE SPECIFICITY FACTOR/HREP PROTEIN"/>
    <property type="match status" value="1"/>
</dbReference>
<dbReference type="PANTHER" id="PTHR19872:SF9">
    <property type="entry name" value="UBIQUITIN-BINDING SDF UBIQUITIN LIGASE COMPLEX SUBUNIT"/>
    <property type="match status" value="1"/>
</dbReference>
<dbReference type="Pfam" id="PF12937">
    <property type="entry name" value="F-box-like"/>
    <property type="match status" value="1"/>
</dbReference>
<dbReference type="Pfam" id="PF00400">
    <property type="entry name" value="WD40"/>
    <property type="match status" value="6"/>
</dbReference>
<dbReference type="PRINTS" id="PR00320">
    <property type="entry name" value="GPROTEINBRPT"/>
</dbReference>
<dbReference type="SMART" id="SM00256">
    <property type="entry name" value="FBOX"/>
    <property type="match status" value="1"/>
</dbReference>
<dbReference type="SMART" id="SM00320">
    <property type="entry name" value="WD40"/>
    <property type="match status" value="7"/>
</dbReference>
<dbReference type="SUPFAM" id="SSF81383">
    <property type="entry name" value="F-box domain"/>
    <property type="match status" value="1"/>
</dbReference>
<dbReference type="SUPFAM" id="SSF50978">
    <property type="entry name" value="WD40 repeat-like"/>
    <property type="match status" value="1"/>
</dbReference>
<dbReference type="PROSITE" id="PS50181">
    <property type="entry name" value="FBOX"/>
    <property type="match status" value="1"/>
</dbReference>
<dbReference type="PROSITE" id="PS00678">
    <property type="entry name" value="WD_REPEATS_1"/>
    <property type="match status" value="4"/>
</dbReference>
<dbReference type="PROSITE" id="PS50082">
    <property type="entry name" value="WD_REPEATS_2"/>
    <property type="match status" value="7"/>
</dbReference>
<dbReference type="PROSITE" id="PS50294">
    <property type="entry name" value="WD_REPEATS_REGION"/>
    <property type="match status" value="1"/>
</dbReference>
<accession>Q00659</accession>
<accession>C8V0Y0</accession>
<accession>Q5AZC1</accession>
<gene>
    <name type="primary">sconB</name>
    <name type="synonym">mapB1</name>
    <name type="ORF">AN6359</name>
</gene>